<name>CLPX_NOVAD</name>
<gene>
    <name evidence="1" type="primary">clpX</name>
    <name type="ordered locus">Saro_3054</name>
</gene>
<comment type="function">
    <text evidence="1">ATP-dependent specificity component of the Clp protease. It directs the protease to specific substrates. Can perform chaperone functions in the absence of ClpP.</text>
</comment>
<comment type="subunit">
    <text evidence="1">Component of the ClpX-ClpP complex. Forms a hexameric ring that, in the presence of ATP, binds to fourteen ClpP subunits assembled into a disk-like structure with a central cavity, resembling the structure of eukaryotic proteasomes.</text>
</comment>
<comment type="similarity">
    <text evidence="1">Belongs to the ClpX chaperone family.</text>
</comment>
<feature type="chain" id="PRO_1000024602" description="ATP-dependent Clp protease ATP-binding subunit ClpX">
    <location>
        <begin position="1"/>
        <end position="418"/>
    </location>
</feature>
<feature type="domain" description="ClpX-type ZB" evidence="2">
    <location>
        <begin position="3"/>
        <end position="56"/>
    </location>
</feature>
<feature type="binding site" evidence="2">
    <location>
        <position position="15"/>
    </location>
    <ligand>
        <name>Zn(2+)</name>
        <dbReference type="ChEBI" id="CHEBI:29105"/>
    </ligand>
</feature>
<feature type="binding site" evidence="2">
    <location>
        <position position="18"/>
    </location>
    <ligand>
        <name>Zn(2+)</name>
        <dbReference type="ChEBI" id="CHEBI:29105"/>
    </ligand>
</feature>
<feature type="binding site" evidence="2">
    <location>
        <position position="37"/>
    </location>
    <ligand>
        <name>Zn(2+)</name>
        <dbReference type="ChEBI" id="CHEBI:29105"/>
    </ligand>
</feature>
<feature type="binding site" evidence="2">
    <location>
        <position position="40"/>
    </location>
    <ligand>
        <name>Zn(2+)</name>
        <dbReference type="ChEBI" id="CHEBI:29105"/>
    </ligand>
</feature>
<feature type="binding site" evidence="1">
    <location>
        <begin position="120"/>
        <end position="127"/>
    </location>
    <ligand>
        <name>ATP</name>
        <dbReference type="ChEBI" id="CHEBI:30616"/>
    </ligand>
</feature>
<dbReference type="EMBL" id="CP000248">
    <property type="protein sequence ID" value="ABD27489.1"/>
    <property type="molecule type" value="Genomic_DNA"/>
</dbReference>
<dbReference type="RefSeq" id="WP_011446693.1">
    <property type="nucleotide sequence ID" value="NC_007794.1"/>
</dbReference>
<dbReference type="SMR" id="Q2G3T4"/>
<dbReference type="STRING" id="279238.Saro_3054"/>
<dbReference type="KEGG" id="nar:Saro_3054"/>
<dbReference type="eggNOG" id="COG1219">
    <property type="taxonomic scope" value="Bacteria"/>
</dbReference>
<dbReference type="HOGENOM" id="CLU_014218_8_2_5"/>
<dbReference type="Proteomes" id="UP000009134">
    <property type="component" value="Chromosome"/>
</dbReference>
<dbReference type="GO" id="GO:0009376">
    <property type="term" value="C:HslUV protease complex"/>
    <property type="evidence" value="ECO:0007669"/>
    <property type="project" value="TreeGrafter"/>
</dbReference>
<dbReference type="GO" id="GO:0005524">
    <property type="term" value="F:ATP binding"/>
    <property type="evidence" value="ECO:0007669"/>
    <property type="project" value="UniProtKB-UniRule"/>
</dbReference>
<dbReference type="GO" id="GO:0016887">
    <property type="term" value="F:ATP hydrolysis activity"/>
    <property type="evidence" value="ECO:0007669"/>
    <property type="project" value="InterPro"/>
</dbReference>
<dbReference type="GO" id="GO:0140662">
    <property type="term" value="F:ATP-dependent protein folding chaperone"/>
    <property type="evidence" value="ECO:0007669"/>
    <property type="project" value="InterPro"/>
</dbReference>
<dbReference type="GO" id="GO:0046983">
    <property type="term" value="F:protein dimerization activity"/>
    <property type="evidence" value="ECO:0007669"/>
    <property type="project" value="InterPro"/>
</dbReference>
<dbReference type="GO" id="GO:0051082">
    <property type="term" value="F:unfolded protein binding"/>
    <property type="evidence" value="ECO:0007669"/>
    <property type="project" value="UniProtKB-UniRule"/>
</dbReference>
<dbReference type="GO" id="GO:0008270">
    <property type="term" value="F:zinc ion binding"/>
    <property type="evidence" value="ECO:0007669"/>
    <property type="project" value="InterPro"/>
</dbReference>
<dbReference type="GO" id="GO:0051301">
    <property type="term" value="P:cell division"/>
    <property type="evidence" value="ECO:0007669"/>
    <property type="project" value="TreeGrafter"/>
</dbReference>
<dbReference type="GO" id="GO:0051603">
    <property type="term" value="P:proteolysis involved in protein catabolic process"/>
    <property type="evidence" value="ECO:0007669"/>
    <property type="project" value="TreeGrafter"/>
</dbReference>
<dbReference type="CDD" id="cd19497">
    <property type="entry name" value="RecA-like_ClpX"/>
    <property type="match status" value="1"/>
</dbReference>
<dbReference type="FunFam" id="1.10.8.60:FF:000002">
    <property type="entry name" value="ATP-dependent Clp protease ATP-binding subunit ClpX"/>
    <property type="match status" value="1"/>
</dbReference>
<dbReference type="FunFam" id="3.40.50.300:FF:000005">
    <property type="entry name" value="ATP-dependent Clp protease ATP-binding subunit ClpX"/>
    <property type="match status" value="1"/>
</dbReference>
<dbReference type="Gene3D" id="1.10.8.60">
    <property type="match status" value="1"/>
</dbReference>
<dbReference type="Gene3D" id="6.20.220.10">
    <property type="entry name" value="ClpX chaperone, C4-type zinc finger domain"/>
    <property type="match status" value="1"/>
</dbReference>
<dbReference type="Gene3D" id="3.40.50.300">
    <property type="entry name" value="P-loop containing nucleotide triphosphate hydrolases"/>
    <property type="match status" value="1"/>
</dbReference>
<dbReference type="HAMAP" id="MF_00175">
    <property type="entry name" value="ClpX"/>
    <property type="match status" value="1"/>
</dbReference>
<dbReference type="InterPro" id="IPR003593">
    <property type="entry name" value="AAA+_ATPase"/>
</dbReference>
<dbReference type="InterPro" id="IPR050052">
    <property type="entry name" value="ATP-dep_Clp_protease_ClpX"/>
</dbReference>
<dbReference type="InterPro" id="IPR003959">
    <property type="entry name" value="ATPase_AAA_core"/>
</dbReference>
<dbReference type="InterPro" id="IPR019489">
    <property type="entry name" value="Clp_ATPase_C"/>
</dbReference>
<dbReference type="InterPro" id="IPR004487">
    <property type="entry name" value="Clp_protease_ATP-bd_su_ClpX"/>
</dbReference>
<dbReference type="InterPro" id="IPR046425">
    <property type="entry name" value="ClpX_bact"/>
</dbReference>
<dbReference type="InterPro" id="IPR027417">
    <property type="entry name" value="P-loop_NTPase"/>
</dbReference>
<dbReference type="InterPro" id="IPR010603">
    <property type="entry name" value="Znf_CppX_C4"/>
</dbReference>
<dbReference type="InterPro" id="IPR038366">
    <property type="entry name" value="Znf_CppX_C4_sf"/>
</dbReference>
<dbReference type="NCBIfam" id="TIGR00382">
    <property type="entry name" value="clpX"/>
    <property type="match status" value="1"/>
</dbReference>
<dbReference type="NCBIfam" id="NF003745">
    <property type="entry name" value="PRK05342.1"/>
    <property type="match status" value="1"/>
</dbReference>
<dbReference type="PANTHER" id="PTHR48102:SF7">
    <property type="entry name" value="ATP-DEPENDENT CLP PROTEASE ATP-BINDING SUBUNIT CLPX-LIKE, MITOCHONDRIAL"/>
    <property type="match status" value="1"/>
</dbReference>
<dbReference type="PANTHER" id="PTHR48102">
    <property type="entry name" value="ATP-DEPENDENT CLP PROTEASE ATP-BINDING SUBUNIT CLPX-LIKE, MITOCHONDRIAL-RELATED"/>
    <property type="match status" value="1"/>
</dbReference>
<dbReference type="Pfam" id="PF07724">
    <property type="entry name" value="AAA_2"/>
    <property type="match status" value="1"/>
</dbReference>
<dbReference type="Pfam" id="PF10431">
    <property type="entry name" value="ClpB_D2-small"/>
    <property type="match status" value="1"/>
</dbReference>
<dbReference type="Pfam" id="PF06689">
    <property type="entry name" value="zf-C4_ClpX"/>
    <property type="match status" value="1"/>
</dbReference>
<dbReference type="SMART" id="SM00382">
    <property type="entry name" value="AAA"/>
    <property type="match status" value="1"/>
</dbReference>
<dbReference type="SMART" id="SM01086">
    <property type="entry name" value="ClpB_D2-small"/>
    <property type="match status" value="1"/>
</dbReference>
<dbReference type="SMART" id="SM00994">
    <property type="entry name" value="zf-C4_ClpX"/>
    <property type="match status" value="1"/>
</dbReference>
<dbReference type="SUPFAM" id="SSF57716">
    <property type="entry name" value="Glucocorticoid receptor-like (DNA-binding domain)"/>
    <property type="match status" value="1"/>
</dbReference>
<dbReference type="SUPFAM" id="SSF52540">
    <property type="entry name" value="P-loop containing nucleoside triphosphate hydrolases"/>
    <property type="match status" value="1"/>
</dbReference>
<dbReference type="PROSITE" id="PS51902">
    <property type="entry name" value="CLPX_ZB"/>
    <property type="match status" value="1"/>
</dbReference>
<protein>
    <recommendedName>
        <fullName evidence="1">ATP-dependent Clp protease ATP-binding subunit ClpX</fullName>
    </recommendedName>
</protein>
<proteinExistence type="inferred from homology"/>
<organism>
    <name type="scientific">Novosphingobium aromaticivorans (strain ATCC 700278 / DSM 12444 / CCUG 56034 / CIP 105152 / NBRC 16084 / F199)</name>
    <dbReference type="NCBI Taxonomy" id="279238"/>
    <lineage>
        <taxon>Bacteria</taxon>
        <taxon>Pseudomonadati</taxon>
        <taxon>Pseudomonadota</taxon>
        <taxon>Alphaproteobacteria</taxon>
        <taxon>Sphingomonadales</taxon>
        <taxon>Sphingomonadaceae</taxon>
        <taxon>Novosphingobium</taxon>
    </lineage>
</organism>
<keyword id="KW-0067">ATP-binding</keyword>
<keyword id="KW-0143">Chaperone</keyword>
<keyword id="KW-0479">Metal-binding</keyword>
<keyword id="KW-0547">Nucleotide-binding</keyword>
<keyword id="KW-1185">Reference proteome</keyword>
<keyword id="KW-0862">Zinc</keyword>
<accession>Q2G3T4</accession>
<evidence type="ECO:0000255" key="1">
    <source>
        <dbReference type="HAMAP-Rule" id="MF_00175"/>
    </source>
</evidence>
<evidence type="ECO:0000255" key="2">
    <source>
        <dbReference type="PROSITE-ProRule" id="PRU01250"/>
    </source>
</evidence>
<reference key="1">
    <citation type="submission" date="2006-01" db="EMBL/GenBank/DDBJ databases">
        <title>Complete sequence of Novosphingobium aromaticivorans DSM 12444.</title>
        <authorList>
            <consortium name="US DOE Joint Genome Institute"/>
            <person name="Copeland A."/>
            <person name="Lucas S."/>
            <person name="Lapidus A."/>
            <person name="Barry K."/>
            <person name="Detter J.C."/>
            <person name="Glavina T."/>
            <person name="Hammon N."/>
            <person name="Israni S."/>
            <person name="Pitluck S."/>
            <person name="Chain P."/>
            <person name="Malfatti S."/>
            <person name="Shin M."/>
            <person name="Vergez L."/>
            <person name="Schmutz J."/>
            <person name="Larimer F."/>
            <person name="Land M."/>
            <person name="Kyrpides N."/>
            <person name="Ivanova N."/>
            <person name="Fredrickson J."/>
            <person name="Balkwill D."/>
            <person name="Romine M.F."/>
            <person name="Richardson P."/>
        </authorList>
    </citation>
    <scope>NUCLEOTIDE SEQUENCE [LARGE SCALE GENOMIC DNA]</scope>
    <source>
        <strain>ATCC 700278 / DSM 12444 / CCUG 56034 / CIP 105152 / NBRC 16084 / F199</strain>
    </source>
</reference>
<sequence>MTKLSGSDTKSTLYCSFCGKSQHEVRKLIAGPTVFICDECVELCNDIIREETKAGIAGKKDGGVPTPRDIFETLNDYVIGQDRAKRVLSVAVHNHYKRLKHSGKGGDVELSKSNILLVGPTGSGKTLLAQTLAKTFDVPFTMADATTLTEAGYVGEDVENIILKLLQASDYNVEKAQHGIVYIDEIDKISRKAENPSITRDVSGEGVQQALLKLMEGTTASVPPQGGRKHPQQEFLQVDTTNILFICGGAFAGLEKIIADRLQKRSIGFGAHVADPDKRKVGELLQKAEPEDLLKFGLIPEFVGRLPVIATLNDLDIEALVKILKEPKNALVKQYAKLFELEDVTLTFTDDALEAIAKKAIERKTGARGLRSIVEGLLLDTMFDVPTESDIAEIVVDKDVVEGRKEPVRVLKGKEEAA</sequence>